<organism>
    <name type="scientific">Escherichia coli (strain ATCC 8739 / DSM 1576 / NBRC 3972 / NCIMB 8545 / WDCM 00012 / Crooks)</name>
    <dbReference type="NCBI Taxonomy" id="481805"/>
    <lineage>
        <taxon>Bacteria</taxon>
        <taxon>Pseudomonadati</taxon>
        <taxon>Pseudomonadota</taxon>
        <taxon>Gammaproteobacteria</taxon>
        <taxon>Enterobacterales</taxon>
        <taxon>Enterobacteriaceae</taxon>
        <taxon>Escherichia</taxon>
    </lineage>
</organism>
<protein>
    <recommendedName>
        <fullName evidence="1">Lysophospholipid transporter LplT</fullName>
    </recommendedName>
</protein>
<name>LPLT_ECOLC</name>
<reference key="1">
    <citation type="submission" date="2008-02" db="EMBL/GenBank/DDBJ databases">
        <title>Complete sequence of Escherichia coli C str. ATCC 8739.</title>
        <authorList>
            <person name="Copeland A."/>
            <person name="Lucas S."/>
            <person name="Lapidus A."/>
            <person name="Glavina del Rio T."/>
            <person name="Dalin E."/>
            <person name="Tice H."/>
            <person name="Bruce D."/>
            <person name="Goodwin L."/>
            <person name="Pitluck S."/>
            <person name="Kiss H."/>
            <person name="Brettin T."/>
            <person name="Detter J.C."/>
            <person name="Han C."/>
            <person name="Kuske C.R."/>
            <person name="Schmutz J."/>
            <person name="Larimer F."/>
            <person name="Land M."/>
            <person name="Hauser L."/>
            <person name="Kyrpides N."/>
            <person name="Mikhailova N."/>
            <person name="Ingram L."/>
            <person name="Richardson P."/>
        </authorList>
    </citation>
    <scope>NUCLEOTIDE SEQUENCE [LARGE SCALE GENOMIC DNA]</scope>
    <source>
        <strain>ATCC 8739 / DSM 1576 / NBRC 3972 / NCIMB 8545 / WDCM 00012 / Crooks</strain>
    </source>
</reference>
<dbReference type="EMBL" id="CP000946">
    <property type="protein sequence ID" value="ACA76549.1"/>
    <property type="molecule type" value="Genomic_DNA"/>
</dbReference>
<dbReference type="RefSeq" id="WP_000004618.1">
    <property type="nucleotide sequence ID" value="NZ_MTFT01000004.1"/>
</dbReference>
<dbReference type="SMR" id="B1IU09"/>
<dbReference type="GeneID" id="93779161"/>
<dbReference type="KEGG" id="ecl:EcolC_0880"/>
<dbReference type="HOGENOM" id="CLU_047399_0_0_6"/>
<dbReference type="GO" id="GO:0005886">
    <property type="term" value="C:plasma membrane"/>
    <property type="evidence" value="ECO:0007669"/>
    <property type="project" value="UniProtKB-SubCell"/>
</dbReference>
<dbReference type="GO" id="GO:0051978">
    <property type="term" value="F:lysophospholipid:sodium symporter activity"/>
    <property type="evidence" value="ECO:0007669"/>
    <property type="project" value="InterPro"/>
</dbReference>
<dbReference type="CDD" id="cd06173">
    <property type="entry name" value="MFS_MefA_like"/>
    <property type="match status" value="1"/>
</dbReference>
<dbReference type="FunFam" id="1.20.1250.20:FF:000091">
    <property type="entry name" value="Lysophospholipid transporter LplT"/>
    <property type="match status" value="1"/>
</dbReference>
<dbReference type="Gene3D" id="1.20.1250.20">
    <property type="entry name" value="MFS general substrate transporter like domains"/>
    <property type="match status" value="1"/>
</dbReference>
<dbReference type="HAMAP" id="MF_01585">
    <property type="entry name" value="MFS_LplT"/>
    <property type="match status" value="1"/>
</dbReference>
<dbReference type="InterPro" id="IPR023727">
    <property type="entry name" value="LysoPLipid__transptr_LplT"/>
</dbReference>
<dbReference type="InterPro" id="IPR011701">
    <property type="entry name" value="MFS"/>
</dbReference>
<dbReference type="InterPro" id="IPR036259">
    <property type="entry name" value="MFS_trans_sf"/>
</dbReference>
<dbReference type="NCBIfam" id="NF008397">
    <property type="entry name" value="PRK11195.1"/>
    <property type="match status" value="1"/>
</dbReference>
<dbReference type="PANTHER" id="PTHR43266">
    <property type="entry name" value="MACROLIDE-EFFLUX PROTEIN"/>
    <property type="match status" value="1"/>
</dbReference>
<dbReference type="PANTHER" id="PTHR43266:SF2">
    <property type="entry name" value="MAJOR FACILITATOR SUPERFAMILY (MFS) PROFILE DOMAIN-CONTAINING PROTEIN"/>
    <property type="match status" value="1"/>
</dbReference>
<dbReference type="Pfam" id="PF07690">
    <property type="entry name" value="MFS_1"/>
    <property type="match status" value="1"/>
</dbReference>
<dbReference type="SUPFAM" id="SSF103473">
    <property type="entry name" value="MFS general substrate transporter"/>
    <property type="match status" value="1"/>
</dbReference>
<comment type="function">
    <text evidence="1">Catalyzes the facilitated diffusion of 2-acyl-glycero-3-phosphoethanolamine (2-acyl-GPE) into the cell.</text>
</comment>
<comment type="subcellular location">
    <subcellularLocation>
        <location evidence="1">Cell inner membrane</location>
        <topology evidence="1">Multi-pass membrane protein</topology>
    </subcellularLocation>
</comment>
<comment type="similarity">
    <text evidence="1">Belongs to the major facilitator superfamily. LplT (TC 2.A.1.42) family.</text>
</comment>
<sequence length="397" mass="41642">MSESVHTNTSLWSKGMKAVIVAQFLSAFGDNALLFATLALLKAQFYPEWSQPILQMVFVGAYILFAPFVGQVADSFAKGRVMMFANGLKLLGAASICFGINPFLGYTLVGVGAAAYSPAKYGILGELTTGSKLVKANGLMEASTIAAILLGSVAGGVLADWHVLVALAACALAYGGAVVANIYIPKLAAARPGQSWNLINMTRSFLNACTSLWRNGETRFSLVGTSLFWGAGVTLRFLLVLWVPVALGITDNATPTYLNAMVAIGIVVGAGAAAKLVTLETVSRCMPAGILIGVVVLIFSLQHELLPAYALLMLIGVMGGFFVVPLNALLQERGKKSVGAGNAIAVQNLGENSAMLLMLGIYSLAVMVGIPVVPIGIGFGALFALAITALWIWQRRH</sequence>
<feature type="chain" id="PRO_1000087951" description="Lysophospholipid transporter LplT">
    <location>
        <begin position="1"/>
        <end position="397"/>
    </location>
</feature>
<feature type="topological domain" description="Periplasmic" evidence="1">
    <location>
        <begin position="1"/>
        <end position="17"/>
    </location>
</feature>
<feature type="transmembrane region" description="Helical" evidence="1">
    <location>
        <begin position="18"/>
        <end position="38"/>
    </location>
</feature>
<feature type="topological domain" description="Cytoplasmic" evidence="1">
    <location>
        <begin position="39"/>
        <end position="52"/>
    </location>
</feature>
<feature type="transmembrane region" description="Helical" evidence="1">
    <location>
        <begin position="53"/>
        <end position="73"/>
    </location>
</feature>
<feature type="topological domain" description="Periplasmic" evidence="1">
    <location>
        <begin position="74"/>
        <end position="90"/>
    </location>
</feature>
<feature type="transmembrane region" description="Helical" evidence="1">
    <location>
        <begin position="91"/>
        <end position="111"/>
    </location>
</feature>
<feature type="topological domain" description="Cytoplasmic" evidence="1">
    <location>
        <begin position="112"/>
        <end position="144"/>
    </location>
</feature>
<feature type="transmembrane region" description="Helical" evidence="1">
    <location>
        <begin position="145"/>
        <end position="165"/>
    </location>
</feature>
<feature type="topological domain" description="Periplasmic" evidence="1">
    <location>
        <position position="166"/>
    </location>
</feature>
<feature type="transmembrane region" description="Helical" evidence="1">
    <location>
        <begin position="167"/>
        <end position="187"/>
    </location>
</feature>
<feature type="topological domain" description="Cytoplasmic" evidence="1">
    <location>
        <begin position="188"/>
        <end position="226"/>
    </location>
</feature>
<feature type="transmembrane region" description="Helical" evidence="1">
    <location>
        <begin position="227"/>
        <end position="247"/>
    </location>
</feature>
<feature type="topological domain" description="Periplasmic" evidence="1">
    <location>
        <begin position="248"/>
        <end position="256"/>
    </location>
</feature>
<feature type="transmembrane region" description="Helical" evidence="1">
    <location>
        <begin position="257"/>
        <end position="277"/>
    </location>
</feature>
<feature type="topological domain" description="Cytoplasmic" evidence="1">
    <location>
        <begin position="278"/>
        <end position="280"/>
    </location>
</feature>
<feature type="transmembrane region" description="Helical" evidence="1">
    <location>
        <begin position="281"/>
        <end position="301"/>
    </location>
</feature>
<feature type="topological domain" description="Periplasmic" evidence="1">
    <location>
        <begin position="302"/>
        <end position="304"/>
    </location>
</feature>
<feature type="transmembrane region" description="Helical" evidence="1">
    <location>
        <begin position="305"/>
        <end position="325"/>
    </location>
</feature>
<feature type="topological domain" description="Cytoplasmic" evidence="1">
    <location>
        <begin position="326"/>
        <end position="343"/>
    </location>
</feature>
<feature type="transmembrane region" description="Helical" evidence="1">
    <location>
        <begin position="344"/>
        <end position="364"/>
    </location>
</feature>
<feature type="topological domain" description="Periplasmic" evidence="1">
    <location>
        <begin position="365"/>
        <end position="366"/>
    </location>
</feature>
<feature type="transmembrane region" description="Helical" evidence="1">
    <location>
        <begin position="367"/>
        <end position="387"/>
    </location>
</feature>
<feature type="topological domain" description="Cytoplasmic" evidence="1">
    <location>
        <begin position="388"/>
        <end position="397"/>
    </location>
</feature>
<accession>B1IU09</accession>
<evidence type="ECO:0000255" key="1">
    <source>
        <dbReference type="HAMAP-Rule" id="MF_01585"/>
    </source>
</evidence>
<proteinExistence type="inferred from homology"/>
<keyword id="KW-0997">Cell inner membrane</keyword>
<keyword id="KW-1003">Cell membrane</keyword>
<keyword id="KW-0445">Lipid transport</keyword>
<keyword id="KW-0472">Membrane</keyword>
<keyword id="KW-0812">Transmembrane</keyword>
<keyword id="KW-1133">Transmembrane helix</keyword>
<keyword id="KW-0813">Transport</keyword>
<gene>
    <name evidence="1" type="primary">lplT</name>
    <name type="ordered locus">EcolC_0880</name>
</gene>